<name>RS3_VIBVU</name>
<accession>Q8DE45</accession>
<dbReference type="EMBL" id="AE016795">
    <property type="protein sequence ID" value="AAO09264.1"/>
    <property type="molecule type" value="Genomic_DNA"/>
</dbReference>
<dbReference type="RefSeq" id="WP_011078826.1">
    <property type="nucleotide sequence ID" value="NC_004459.3"/>
</dbReference>
<dbReference type="SMR" id="Q8DE45"/>
<dbReference type="GeneID" id="93895060"/>
<dbReference type="KEGG" id="vvu:VV1_0756"/>
<dbReference type="HOGENOM" id="CLU_058591_0_2_6"/>
<dbReference type="Proteomes" id="UP000002275">
    <property type="component" value="Chromosome 1"/>
</dbReference>
<dbReference type="GO" id="GO:0022627">
    <property type="term" value="C:cytosolic small ribosomal subunit"/>
    <property type="evidence" value="ECO:0007669"/>
    <property type="project" value="TreeGrafter"/>
</dbReference>
<dbReference type="GO" id="GO:0003729">
    <property type="term" value="F:mRNA binding"/>
    <property type="evidence" value="ECO:0007669"/>
    <property type="project" value="UniProtKB-UniRule"/>
</dbReference>
<dbReference type="GO" id="GO:0019843">
    <property type="term" value="F:rRNA binding"/>
    <property type="evidence" value="ECO:0007669"/>
    <property type="project" value="UniProtKB-UniRule"/>
</dbReference>
<dbReference type="GO" id="GO:0003735">
    <property type="term" value="F:structural constituent of ribosome"/>
    <property type="evidence" value="ECO:0007669"/>
    <property type="project" value="InterPro"/>
</dbReference>
<dbReference type="GO" id="GO:0006412">
    <property type="term" value="P:translation"/>
    <property type="evidence" value="ECO:0007669"/>
    <property type="project" value="UniProtKB-UniRule"/>
</dbReference>
<dbReference type="CDD" id="cd02412">
    <property type="entry name" value="KH-II_30S_S3"/>
    <property type="match status" value="1"/>
</dbReference>
<dbReference type="FunFam" id="3.30.1140.32:FF:000001">
    <property type="entry name" value="30S ribosomal protein S3"/>
    <property type="match status" value="1"/>
</dbReference>
<dbReference type="FunFam" id="3.30.300.20:FF:000001">
    <property type="entry name" value="30S ribosomal protein S3"/>
    <property type="match status" value="1"/>
</dbReference>
<dbReference type="Gene3D" id="3.30.300.20">
    <property type="match status" value="1"/>
</dbReference>
<dbReference type="Gene3D" id="3.30.1140.32">
    <property type="entry name" value="Ribosomal protein S3, C-terminal domain"/>
    <property type="match status" value="1"/>
</dbReference>
<dbReference type="HAMAP" id="MF_01309_B">
    <property type="entry name" value="Ribosomal_uS3_B"/>
    <property type="match status" value="1"/>
</dbReference>
<dbReference type="InterPro" id="IPR004087">
    <property type="entry name" value="KH_dom"/>
</dbReference>
<dbReference type="InterPro" id="IPR015946">
    <property type="entry name" value="KH_dom-like_a/b"/>
</dbReference>
<dbReference type="InterPro" id="IPR004044">
    <property type="entry name" value="KH_dom_type_2"/>
</dbReference>
<dbReference type="InterPro" id="IPR009019">
    <property type="entry name" value="KH_sf_prok-type"/>
</dbReference>
<dbReference type="InterPro" id="IPR036419">
    <property type="entry name" value="Ribosomal_S3_C_sf"/>
</dbReference>
<dbReference type="InterPro" id="IPR005704">
    <property type="entry name" value="Ribosomal_uS3_bac-typ"/>
</dbReference>
<dbReference type="InterPro" id="IPR001351">
    <property type="entry name" value="Ribosomal_uS3_C"/>
</dbReference>
<dbReference type="InterPro" id="IPR018280">
    <property type="entry name" value="Ribosomal_uS3_CS"/>
</dbReference>
<dbReference type="NCBIfam" id="TIGR01009">
    <property type="entry name" value="rpsC_bact"/>
    <property type="match status" value="1"/>
</dbReference>
<dbReference type="PANTHER" id="PTHR11760">
    <property type="entry name" value="30S/40S RIBOSOMAL PROTEIN S3"/>
    <property type="match status" value="1"/>
</dbReference>
<dbReference type="PANTHER" id="PTHR11760:SF19">
    <property type="entry name" value="SMALL RIBOSOMAL SUBUNIT PROTEIN US3C"/>
    <property type="match status" value="1"/>
</dbReference>
<dbReference type="Pfam" id="PF07650">
    <property type="entry name" value="KH_2"/>
    <property type="match status" value="1"/>
</dbReference>
<dbReference type="Pfam" id="PF00189">
    <property type="entry name" value="Ribosomal_S3_C"/>
    <property type="match status" value="1"/>
</dbReference>
<dbReference type="SMART" id="SM00322">
    <property type="entry name" value="KH"/>
    <property type="match status" value="1"/>
</dbReference>
<dbReference type="SUPFAM" id="SSF54814">
    <property type="entry name" value="Prokaryotic type KH domain (KH-domain type II)"/>
    <property type="match status" value="1"/>
</dbReference>
<dbReference type="SUPFAM" id="SSF54821">
    <property type="entry name" value="Ribosomal protein S3 C-terminal domain"/>
    <property type="match status" value="1"/>
</dbReference>
<dbReference type="PROSITE" id="PS50823">
    <property type="entry name" value="KH_TYPE_2"/>
    <property type="match status" value="1"/>
</dbReference>
<dbReference type="PROSITE" id="PS00548">
    <property type="entry name" value="RIBOSOMAL_S3"/>
    <property type="match status" value="1"/>
</dbReference>
<organism>
    <name type="scientific">Vibrio vulnificus (strain CMCP6)</name>
    <dbReference type="NCBI Taxonomy" id="216895"/>
    <lineage>
        <taxon>Bacteria</taxon>
        <taxon>Pseudomonadati</taxon>
        <taxon>Pseudomonadota</taxon>
        <taxon>Gammaproteobacteria</taxon>
        <taxon>Vibrionales</taxon>
        <taxon>Vibrionaceae</taxon>
        <taxon>Vibrio</taxon>
    </lineage>
</organism>
<sequence length="233" mass="25684">MGQKVHPNGIRLGIVKPWNATWFANTKDFADNLDGDFKVRQFLTKELSKASLSRIVIERPAKSIRVTIHTARPGVVIGKKGEDVEKLRTAVAKIAGVPAQINIAEVRKPELDAQLVGDSIASQLERRVMFRRAMKRAVQNAMRLGAKGIKVEVSGRLGGAEIARSEWYREGRVPLHTLRADIDYATSSAHTTYGVIGIKVWIFKGEILGGMPAATEAAEPKADKPKKQRKGRK</sequence>
<feature type="chain" id="PRO_0000130232" description="Small ribosomal subunit protein uS3">
    <location>
        <begin position="1"/>
        <end position="233"/>
    </location>
</feature>
<feature type="domain" description="KH type-2" evidence="1">
    <location>
        <begin position="39"/>
        <end position="107"/>
    </location>
</feature>
<proteinExistence type="inferred from homology"/>
<evidence type="ECO:0000255" key="1">
    <source>
        <dbReference type="HAMAP-Rule" id="MF_01309"/>
    </source>
</evidence>
<evidence type="ECO:0000305" key="2"/>
<reference key="1">
    <citation type="submission" date="2002-12" db="EMBL/GenBank/DDBJ databases">
        <title>Complete genome sequence of Vibrio vulnificus CMCP6.</title>
        <authorList>
            <person name="Rhee J.H."/>
            <person name="Kim S.Y."/>
            <person name="Chung S.S."/>
            <person name="Kim J.J."/>
            <person name="Moon Y.H."/>
            <person name="Jeong H."/>
            <person name="Choy H.E."/>
        </authorList>
    </citation>
    <scope>NUCLEOTIDE SEQUENCE [LARGE SCALE GENOMIC DNA]</scope>
    <source>
        <strain>CMCP6</strain>
    </source>
</reference>
<gene>
    <name evidence="1" type="primary">rpsC</name>
    <name type="ordered locus">VV1_0756</name>
</gene>
<keyword id="KW-0687">Ribonucleoprotein</keyword>
<keyword id="KW-0689">Ribosomal protein</keyword>
<keyword id="KW-0694">RNA-binding</keyword>
<keyword id="KW-0699">rRNA-binding</keyword>
<comment type="function">
    <text evidence="1">Binds the lower part of the 30S subunit head. Binds mRNA in the 70S ribosome, positioning it for translation.</text>
</comment>
<comment type="subunit">
    <text evidence="1">Part of the 30S ribosomal subunit. Forms a tight complex with proteins S10 and S14.</text>
</comment>
<comment type="similarity">
    <text evidence="1">Belongs to the universal ribosomal protein uS3 family.</text>
</comment>
<protein>
    <recommendedName>
        <fullName evidence="1">Small ribosomal subunit protein uS3</fullName>
    </recommendedName>
    <alternativeName>
        <fullName evidence="2">30S ribosomal protein S3</fullName>
    </alternativeName>
</protein>